<name>TEX10_CHICK</name>
<gene>
    <name type="primary">TEX10</name>
    <name type="ORF">RCJMB04_3d16</name>
</gene>
<sequence>MTKKRKHQEDFQKVKLKVGKKKPKLENATDTTFKTKAIQIPEQLKEDGMLTTQNRKLNIKDLLSQMHHYSPGVKQNALLGLKDLLSQYPFLIDAHLSNIISEVAAVFTDKDSGVRGAAVHLLQFLASKIRAEQIAPFFPLVSAHLSSAMTHISEGIQEDSLKVLDILLEAYPALLTDRSSILLKNFVELISHQQLSKRLKSKEKLSWMLSVNPNRRVTSQQWRLNVLIRLKKFLQAVVDGSNETEDEGLQEQKDSPHSVRNPIFISWKVHANNQQHIHLYENGGLRPKMSSSFRLRSLASVMDSAEKGLSSAENLKGFIEIIIPLLIECWIEASPAQSAPILGNLLESDCQQLMQQVLSIIHLLWKLTKRHDETYKMEVWLRMNYLVDFKHHFMRNFPYSLQETVKHKKKDSCKGNKYCTTSSNNVDHLLLNLTLCDIMVSLASASTLQADSGWLDMIRNFVTDTLQDGSRLNSKQVNRLLGVTWRLMQIQQNKVATEPLIKAVYTLYQQRNLLFPVRTLLLKFFSRVYQKEDSKTQRIRSRSKVLSRWLAGLPQQLALLGLRNPELSNQLIDIIHSAASRSNKELLQSLQATAVQIYDPLGGTLVLLPAEAQRRLVQLVYFLPCLPTSLLACLSRCCIMGRMSSELAATLIGILRMRSSFAGWKCQVQDNAVNDVDYFSFLFSTLIGFSREELTSLQGIRGKPHISQTQLSPVRLYLTDLDQFLHHWAVTEVICHSLSTIPSQSQCFDILQTGICKYLVGLVVIPDSTAGSVLCAINKLLDQACILSENLHKFLASCCYSLLYFLLTLDKEDAEHVQKRDMLWGSCISALALLPRLLRLMLQSLQVSRICREELPVVAQLLRLLMQHGQLRSHMMTNEFLVQQIIKDIMTLKSGEVQEQWLTDLHYCFNIYLASHPQGPSPMNAVY</sequence>
<reference key="1">
    <citation type="journal article" date="2005" name="Genome Biol.">
        <title>Full-length cDNAs from chicken bursal lymphocytes to facilitate gene function analysis.</title>
        <authorList>
            <person name="Caldwell R.B."/>
            <person name="Kierzek A.M."/>
            <person name="Arakawa H."/>
            <person name="Bezzubov Y."/>
            <person name="Zaim J."/>
            <person name="Fiedler P."/>
            <person name="Kutter S."/>
            <person name="Blagodatski A."/>
            <person name="Kostovska D."/>
            <person name="Koter M."/>
            <person name="Plachy J."/>
            <person name="Carninci P."/>
            <person name="Hayashizaki Y."/>
            <person name="Buerstedde J.-M."/>
        </authorList>
    </citation>
    <scope>NUCLEOTIDE SEQUENCE [LARGE SCALE MRNA]</scope>
    <source>
        <strain>CB</strain>
        <tissue>Bursa of Fabricius</tissue>
    </source>
</reference>
<protein>
    <recommendedName>
        <fullName>Testis-expressed protein 10 homolog</fullName>
    </recommendedName>
</protein>
<evidence type="ECO:0000250" key="1">
    <source>
        <dbReference type="UniProtKB" id="Q3URQ0"/>
    </source>
</evidence>
<evidence type="ECO:0000250" key="2">
    <source>
        <dbReference type="UniProtKB" id="Q9NXF1"/>
    </source>
</evidence>
<evidence type="ECO:0000305" key="3"/>
<accession>Q5ZM41</accession>
<organism>
    <name type="scientific">Gallus gallus</name>
    <name type="common">Chicken</name>
    <dbReference type="NCBI Taxonomy" id="9031"/>
    <lineage>
        <taxon>Eukaryota</taxon>
        <taxon>Metazoa</taxon>
        <taxon>Chordata</taxon>
        <taxon>Craniata</taxon>
        <taxon>Vertebrata</taxon>
        <taxon>Euteleostomi</taxon>
        <taxon>Archelosauria</taxon>
        <taxon>Archosauria</taxon>
        <taxon>Dinosauria</taxon>
        <taxon>Saurischia</taxon>
        <taxon>Theropoda</taxon>
        <taxon>Coelurosauria</taxon>
        <taxon>Aves</taxon>
        <taxon>Neognathae</taxon>
        <taxon>Galloanserae</taxon>
        <taxon>Galliformes</taxon>
        <taxon>Phasianidae</taxon>
        <taxon>Phasianinae</taxon>
        <taxon>Gallus</taxon>
    </lineage>
</organism>
<proteinExistence type="evidence at transcript level"/>
<dbReference type="EMBL" id="AJ719543">
    <property type="protein sequence ID" value="CAG31202.1"/>
    <property type="molecule type" value="mRNA"/>
</dbReference>
<dbReference type="RefSeq" id="NP_001026179.1">
    <property type="nucleotide sequence ID" value="NM_001031008.2"/>
</dbReference>
<dbReference type="SMR" id="Q5ZM41"/>
<dbReference type="FunCoup" id="Q5ZM41">
    <property type="interactions" value="2216"/>
</dbReference>
<dbReference type="STRING" id="9031.ENSGALP00000021875"/>
<dbReference type="PaxDb" id="9031-ENSGALP00000021875"/>
<dbReference type="GeneID" id="420993"/>
<dbReference type="KEGG" id="gga:420993"/>
<dbReference type="CTD" id="54881"/>
<dbReference type="VEuPathDB" id="HostDB:geneid_420993"/>
<dbReference type="eggNOG" id="KOG2149">
    <property type="taxonomic scope" value="Eukaryota"/>
</dbReference>
<dbReference type="InParanoid" id="Q5ZM41"/>
<dbReference type="OrthoDB" id="361362at2759"/>
<dbReference type="PhylomeDB" id="Q5ZM41"/>
<dbReference type="PRO" id="PR:Q5ZM41"/>
<dbReference type="Proteomes" id="UP000000539">
    <property type="component" value="Unassembled WGS sequence"/>
</dbReference>
<dbReference type="GO" id="GO:0071339">
    <property type="term" value="C:MLL1 complex"/>
    <property type="evidence" value="ECO:0000250"/>
    <property type="project" value="UniProtKB"/>
</dbReference>
<dbReference type="GO" id="GO:0005730">
    <property type="term" value="C:nucleolus"/>
    <property type="evidence" value="ECO:0007669"/>
    <property type="project" value="UniProtKB-SubCell"/>
</dbReference>
<dbReference type="GO" id="GO:0005634">
    <property type="term" value="C:nucleus"/>
    <property type="evidence" value="ECO:0000318"/>
    <property type="project" value="GO_Central"/>
</dbReference>
<dbReference type="FunFam" id="1.25.10.10:FF:000164">
    <property type="entry name" value="Testis-expressed sequence 10 protein"/>
    <property type="match status" value="1"/>
</dbReference>
<dbReference type="Gene3D" id="1.25.10.10">
    <property type="entry name" value="Leucine-rich Repeat Variant"/>
    <property type="match status" value="1"/>
</dbReference>
<dbReference type="InterPro" id="IPR011989">
    <property type="entry name" value="ARM-like"/>
</dbReference>
<dbReference type="InterPro" id="IPR016024">
    <property type="entry name" value="ARM-type_fold"/>
</dbReference>
<dbReference type="InterPro" id="IPR024679">
    <property type="entry name" value="Ipi1_N"/>
</dbReference>
<dbReference type="PANTHER" id="PTHR16056">
    <property type="entry name" value="REGULATOR OF MICROTUBULE DYNAMICS PROTEIN"/>
    <property type="match status" value="1"/>
</dbReference>
<dbReference type="PANTHER" id="PTHR16056:SF2">
    <property type="entry name" value="TESTIS-EXPRESSED PROTEIN 10"/>
    <property type="match status" value="1"/>
</dbReference>
<dbReference type="Pfam" id="PF12333">
    <property type="entry name" value="Ipi1_N"/>
    <property type="match status" value="1"/>
</dbReference>
<dbReference type="SUPFAM" id="SSF48371">
    <property type="entry name" value="ARM repeat"/>
    <property type="match status" value="1"/>
</dbReference>
<feature type="chain" id="PRO_0000072490" description="Testis-expressed protein 10 homolog">
    <location>
        <begin position="1"/>
        <end position="927"/>
    </location>
</feature>
<feature type="repeat" description="HEAT">
    <location>
        <begin position="99"/>
        <end position="137"/>
    </location>
</feature>
<keyword id="KW-0539">Nucleus</keyword>
<keyword id="KW-1185">Reference proteome</keyword>
<comment type="function">
    <text evidence="2">Component of the PELP1 complex involved in the nucleolar steps of 28S rRNA maturation and the subsequent nucleoplasmic transit of the pre-60S ribosomal subunit.</text>
</comment>
<comment type="subunit">
    <text evidence="2">Component of some MLL1/MLL complex. Component of the PELP1 complex, composed of at least PELP1, TEX10 and WDR18. The complex interacts with pre-60S ribosome particles.</text>
</comment>
<comment type="subcellular location">
    <subcellularLocation>
        <location evidence="1">Nucleus</location>
        <location evidence="1">Nucleoplasm</location>
    </subcellularLocation>
    <subcellularLocation>
        <location evidence="2">Nucleus</location>
        <location evidence="2">Nucleolus</location>
    </subcellularLocation>
</comment>
<comment type="similarity">
    <text evidence="3">Belongs to the IPI1/TEX10 family.</text>
</comment>